<keyword id="KW-1015">Disulfide bond</keyword>
<keyword id="KW-0339">Growth factor</keyword>
<keyword id="KW-0873">Pyrrolidone carboxylic acid</keyword>
<keyword id="KW-1185">Reference proteome</keyword>
<keyword id="KW-0964">Secreted</keyword>
<keyword id="KW-0732">Signal</keyword>
<evidence type="ECO:0000250" key="1"/>
<evidence type="ECO:0000255" key="2"/>
<evidence type="ECO:0000255" key="3">
    <source>
        <dbReference type="PROSITE-ProRule" id="PRU00779"/>
    </source>
</evidence>
<feature type="signal peptide" evidence="2">
    <location>
        <begin position="1"/>
        <end position="21"/>
    </location>
</feature>
<feature type="chain" id="PRO_0000023458" description="Trefoil factor 1">
    <location>
        <begin position="22"/>
        <end position="81"/>
    </location>
</feature>
<feature type="domain" description="P-type" evidence="3">
    <location>
        <begin position="26"/>
        <end position="69"/>
    </location>
</feature>
<feature type="modified residue" description="Pyrrolidone carboxylic acid" evidence="2">
    <location>
        <position position="22"/>
    </location>
</feature>
<feature type="disulfide bond" evidence="3">
    <location>
        <begin position="28"/>
        <end position="54"/>
    </location>
</feature>
<feature type="disulfide bond" evidence="3">
    <location>
        <begin position="38"/>
        <end position="53"/>
    </location>
</feature>
<feature type="disulfide bond" evidence="3">
    <location>
        <begin position="48"/>
        <end position="65"/>
    </location>
</feature>
<accession>Q63467</accession>
<proteinExistence type="inferred from homology"/>
<sequence>MEHKVTCVLAMVLMLALSSLAQNQEETCAVIPRERINCGFPGVTAQQCKEKGCCFDDSVRGFPWCFRPLVIENQQEEECPF</sequence>
<organism>
    <name type="scientific">Rattus norvegicus</name>
    <name type="common">Rat</name>
    <dbReference type="NCBI Taxonomy" id="10116"/>
    <lineage>
        <taxon>Eukaryota</taxon>
        <taxon>Metazoa</taxon>
        <taxon>Chordata</taxon>
        <taxon>Craniata</taxon>
        <taxon>Vertebrata</taxon>
        <taxon>Euteleostomi</taxon>
        <taxon>Mammalia</taxon>
        <taxon>Eutheria</taxon>
        <taxon>Euarchontoglires</taxon>
        <taxon>Glires</taxon>
        <taxon>Rodentia</taxon>
        <taxon>Myomorpha</taxon>
        <taxon>Muroidea</taxon>
        <taxon>Muridae</taxon>
        <taxon>Murinae</taxon>
        <taxon>Rattus</taxon>
    </lineage>
</organism>
<name>TFF1_RAT</name>
<reference key="1">
    <citation type="journal article" date="1996" name="Biochem. J.">
        <title>cDNA cloning of rat pS2 peptide and expression of trefoil peptides in acetic acid-induced colitis.</title>
        <authorList>
            <person name="Itoh H."/>
            <person name="Tomita M."/>
            <person name="Uchino H."/>
            <person name="Kobayashi T."/>
            <person name="Kataoka H."/>
            <person name="Sekiya R."/>
            <person name="Nawa Y."/>
        </authorList>
    </citation>
    <scope>NUCLEOTIDE SEQUENCE [MRNA]</scope>
    <source>
        <strain>Wistar</strain>
        <tissue>Stomach</tissue>
    </source>
</reference>
<dbReference type="EMBL" id="D83231">
    <property type="protein sequence ID" value="BAA11857.1"/>
    <property type="molecule type" value="mRNA"/>
</dbReference>
<dbReference type="PIR" id="S71962">
    <property type="entry name" value="S71962"/>
</dbReference>
<dbReference type="RefSeq" id="NP_476470.1">
    <property type="nucleotide sequence ID" value="NM_057129.2"/>
</dbReference>
<dbReference type="SMR" id="Q63467"/>
<dbReference type="FunCoup" id="Q63467">
    <property type="interactions" value="128"/>
</dbReference>
<dbReference type="STRING" id="10116.ENSRNOP00000001538"/>
<dbReference type="PaxDb" id="10116-ENSRNOP00000001538"/>
<dbReference type="Ensembl" id="ENSRNOT00000001538.2">
    <property type="protein sequence ID" value="ENSRNOP00000001538.1"/>
    <property type="gene ID" value="ENSRNOG00000001164.2"/>
</dbReference>
<dbReference type="GeneID" id="117270"/>
<dbReference type="KEGG" id="rno:117270"/>
<dbReference type="UCSC" id="RGD:620707">
    <property type="organism name" value="rat"/>
</dbReference>
<dbReference type="AGR" id="RGD:620707"/>
<dbReference type="CTD" id="7031"/>
<dbReference type="RGD" id="620707">
    <property type="gene designation" value="Tff1"/>
</dbReference>
<dbReference type="eggNOG" id="ENOG502S00P">
    <property type="taxonomic scope" value="Eukaryota"/>
</dbReference>
<dbReference type="GeneTree" id="ENSGT00940000162623"/>
<dbReference type="HOGENOM" id="CLU_179440_1_0_1"/>
<dbReference type="InParanoid" id="Q63467"/>
<dbReference type="OMA" id="FPWCFHP"/>
<dbReference type="OrthoDB" id="36027at9989"/>
<dbReference type="PhylomeDB" id="Q63467"/>
<dbReference type="TreeFam" id="TF336092"/>
<dbReference type="PRO" id="PR:Q63467"/>
<dbReference type="Proteomes" id="UP000002494">
    <property type="component" value="Chromosome 20"/>
</dbReference>
<dbReference type="Bgee" id="ENSRNOG00000001164">
    <property type="expression patterns" value="Expressed in stomach and 12 other cell types or tissues"/>
</dbReference>
<dbReference type="GO" id="GO:0005615">
    <property type="term" value="C:extracellular space"/>
    <property type="evidence" value="ECO:0000314"/>
    <property type="project" value="RGD"/>
</dbReference>
<dbReference type="GO" id="GO:0008083">
    <property type="term" value="F:growth factor activity"/>
    <property type="evidence" value="ECO:0007669"/>
    <property type="project" value="UniProtKB-KW"/>
</dbReference>
<dbReference type="GO" id="GO:0030154">
    <property type="term" value="P:cell differentiation"/>
    <property type="evidence" value="ECO:0000266"/>
    <property type="project" value="RGD"/>
</dbReference>
<dbReference type="GO" id="GO:0008283">
    <property type="term" value="P:cell population proliferation"/>
    <property type="evidence" value="ECO:0000266"/>
    <property type="project" value="RGD"/>
</dbReference>
<dbReference type="GO" id="GO:0030277">
    <property type="term" value="P:maintenance of gastrointestinal epithelium"/>
    <property type="evidence" value="ECO:0000270"/>
    <property type="project" value="RGD"/>
</dbReference>
<dbReference type="GO" id="GO:0008285">
    <property type="term" value="P:negative regulation of cell population proliferation"/>
    <property type="evidence" value="ECO:0000266"/>
    <property type="project" value="RGD"/>
</dbReference>
<dbReference type="GO" id="GO:0035902">
    <property type="term" value="P:response to immobilization stress"/>
    <property type="evidence" value="ECO:0000270"/>
    <property type="project" value="RGD"/>
</dbReference>
<dbReference type="GO" id="GO:0010039">
    <property type="term" value="P:response to iron ion"/>
    <property type="evidence" value="ECO:0000270"/>
    <property type="project" value="RGD"/>
</dbReference>
<dbReference type="GO" id="GO:0043434">
    <property type="term" value="P:response to peptide hormone"/>
    <property type="evidence" value="ECO:0000270"/>
    <property type="project" value="RGD"/>
</dbReference>
<dbReference type="CDD" id="cd00111">
    <property type="entry name" value="Trefoil"/>
    <property type="match status" value="1"/>
</dbReference>
<dbReference type="FunFam" id="4.10.110.10:FF:000001">
    <property type="entry name" value="Trefoil factor 3"/>
    <property type="match status" value="1"/>
</dbReference>
<dbReference type="Gene3D" id="4.10.110.10">
    <property type="entry name" value="Spasmolytic Protein, domain 1"/>
    <property type="match status" value="1"/>
</dbReference>
<dbReference type="InterPro" id="IPR017994">
    <property type="entry name" value="P_trefoil_chordata"/>
</dbReference>
<dbReference type="InterPro" id="IPR017957">
    <property type="entry name" value="P_trefoil_CS"/>
</dbReference>
<dbReference type="InterPro" id="IPR000519">
    <property type="entry name" value="P_trefoil_dom"/>
</dbReference>
<dbReference type="InterPro" id="IPR044913">
    <property type="entry name" value="P_trefoil_dom_sf"/>
</dbReference>
<dbReference type="PANTHER" id="PTHR13826">
    <property type="entry name" value="INTESTINAL TREFOIL FACTOR-RELATED"/>
    <property type="match status" value="1"/>
</dbReference>
<dbReference type="PANTHER" id="PTHR13826:SF18">
    <property type="entry name" value="TREFOIL FACTOR 1"/>
    <property type="match status" value="1"/>
</dbReference>
<dbReference type="Pfam" id="PF00088">
    <property type="entry name" value="Trefoil"/>
    <property type="match status" value="1"/>
</dbReference>
<dbReference type="PRINTS" id="PR00680">
    <property type="entry name" value="PTREFOIL"/>
</dbReference>
<dbReference type="SMART" id="SM00018">
    <property type="entry name" value="PD"/>
    <property type="match status" value="1"/>
</dbReference>
<dbReference type="SUPFAM" id="SSF57492">
    <property type="entry name" value="Trefoil"/>
    <property type="match status" value="1"/>
</dbReference>
<dbReference type="PROSITE" id="PS00025">
    <property type="entry name" value="P_TREFOIL_1"/>
    <property type="match status" value="1"/>
</dbReference>
<dbReference type="PROSITE" id="PS51448">
    <property type="entry name" value="P_TREFOIL_2"/>
    <property type="match status" value="1"/>
</dbReference>
<gene>
    <name type="primary">Tff1</name>
    <name type="synonym">Ps2</name>
</gene>
<protein>
    <recommendedName>
        <fullName>Trefoil factor 1</fullName>
    </recommendedName>
    <alternativeName>
        <fullName>Protein pS2</fullName>
    </alternativeName>
</protein>
<comment type="function">
    <text evidence="1">Stabilizer of the mucous gel overlying the gastrointestinal mucosa that provides a physical barrier against various noxious agents.</text>
</comment>
<comment type="subcellular location">
    <subcellularLocation>
        <location>Secreted</location>
    </subcellularLocation>
</comment>